<organism>
    <name type="scientific">Cereibacter sphaeroides (strain KD131 / KCTC 12085)</name>
    <name type="common">Rhodobacter sphaeroides</name>
    <dbReference type="NCBI Taxonomy" id="557760"/>
    <lineage>
        <taxon>Bacteria</taxon>
        <taxon>Pseudomonadati</taxon>
        <taxon>Pseudomonadota</taxon>
        <taxon>Alphaproteobacteria</taxon>
        <taxon>Rhodobacterales</taxon>
        <taxon>Paracoccaceae</taxon>
        <taxon>Cereibacter</taxon>
    </lineage>
</organism>
<keyword id="KW-0067">ATP-binding</keyword>
<keyword id="KW-0963">Cytoplasm</keyword>
<keyword id="KW-0436">Ligase</keyword>
<keyword id="KW-0460">Magnesium</keyword>
<keyword id="KW-0479">Metal-binding</keyword>
<keyword id="KW-0547">Nucleotide-binding</keyword>
<keyword id="KW-0658">Purine biosynthesis</keyword>
<reference key="1">
    <citation type="journal article" date="2009" name="J. Bacteriol.">
        <title>Complete genome sequence of Rhodobacter sphaeroides KD131.</title>
        <authorList>
            <person name="Lim S.-K."/>
            <person name="Kim S.J."/>
            <person name="Cha S.H."/>
            <person name="Oh Y.-K."/>
            <person name="Rhee H.-J."/>
            <person name="Kim M.-S."/>
            <person name="Lee J.K."/>
        </authorList>
    </citation>
    <scope>NUCLEOTIDE SEQUENCE [LARGE SCALE GENOMIC DNA]</scope>
    <source>
        <strain>KD131 / KCTC 12085</strain>
    </source>
</reference>
<dbReference type="EC" id="6.3.5.3" evidence="1"/>
<dbReference type="EMBL" id="CP001150">
    <property type="protein sequence ID" value="ACM01131.1"/>
    <property type="molecule type" value="Genomic_DNA"/>
</dbReference>
<dbReference type="RefSeq" id="WP_015920633.1">
    <property type="nucleotide sequence ID" value="NC_011963.1"/>
</dbReference>
<dbReference type="SMR" id="B9KSY5"/>
<dbReference type="GeneID" id="67446692"/>
<dbReference type="KEGG" id="rsk:RSKD131_1271"/>
<dbReference type="HOGENOM" id="CLU_003100_0_1_5"/>
<dbReference type="UniPathway" id="UPA00074">
    <property type="reaction ID" value="UER00128"/>
</dbReference>
<dbReference type="GO" id="GO:0005737">
    <property type="term" value="C:cytoplasm"/>
    <property type="evidence" value="ECO:0007669"/>
    <property type="project" value="UniProtKB-SubCell"/>
</dbReference>
<dbReference type="GO" id="GO:0005524">
    <property type="term" value="F:ATP binding"/>
    <property type="evidence" value="ECO:0007669"/>
    <property type="project" value="UniProtKB-UniRule"/>
</dbReference>
<dbReference type="GO" id="GO:0000287">
    <property type="term" value="F:magnesium ion binding"/>
    <property type="evidence" value="ECO:0007669"/>
    <property type="project" value="UniProtKB-UniRule"/>
</dbReference>
<dbReference type="GO" id="GO:0004642">
    <property type="term" value="F:phosphoribosylformylglycinamidine synthase activity"/>
    <property type="evidence" value="ECO:0007669"/>
    <property type="project" value="UniProtKB-UniRule"/>
</dbReference>
<dbReference type="GO" id="GO:0006189">
    <property type="term" value="P:'de novo' IMP biosynthetic process"/>
    <property type="evidence" value="ECO:0007669"/>
    <property type="project" value="UniProtKB-UniRule"/>
</dbReference>
<dbReference type="CDD" id="cd02203">
    <property type="entry name" value="PurL_repeat1"/>
    <property type="match status" value="1"/>
</dbReference>
<dbReference type="CDD" id="cd02204">
    <property type="entry name" value="PurL_repeat2"/>
    <property type="match status" value="1"/>
</dbReference>
<dbReference type="FunFam" id="3.30.1330.10:FF:000004">
    <property type="entry name" value="Phosphoribosylformylglycinamidine synthase subunit PurL"/>
    <property type="match status" value="1"/>
</dbReference>
<dbReference type="Gene3D" id="3.90.650.10">
    <property type="entry name" value="PurM-like C-terminal domain"/>
    <property type="match status" value="2"/>
</dbReference>
<dbReference type="Gene3D" id="3.30.1330.10">
    <property type="entry name" value="PurM-like, N-terminal domain"/>
    <property type="match status" value="2"/>
</dbReference>
<dbReference type="HAMAP" id="MF_00420">
    <property type="entry name" value="PurL_2"/>
    <property type="match status" value="1"/>
</dbReference>
<dbReference type="InterPro" id="IPR010074">
    <property type="entry name" value="PRibForGlyAmidine_synth_PurL"/>
</dbReference>
<dbReference type="InterPro" id="IPR041609">
    <property type="entry name" value="PurL_linker"/>
</dbReference>
<dbReference type="InterPro" id="IPR010918">
    <property type="entry name" value="PurM-like_C_dom"/>
</dbReference>
<dbReference type="InterPro" id="IPR036676">
    <property type="entry name" value="PurM-like_C_sf"/>
</dbReference>
<dbReference type="InterPro" id="IPR016188">
    <property type="entry name" value="PurM-like_N"/>
</dbReference>
<dbReference type="InterPro" id="IPR036921">
    <property type="entry name" value="PurM-like_N_sf"/>
</dbReference>
<dbReference type="NCBIfam" id="TIGR01736">
    <property type="entry name" value="FGAM_synth_II"/>
    <property type="match status" value="1"/>
</dbReference>
<dbReference type="NCBIfam" id="NF002290">
    <property type="entry name" value="PRK01213.1"/>
    <property type="match status" value="1"/>
</dbReference>
<dbReference type="PANTHER" id="PTHR43555">
    <property type="entry name" value="PHOSPHORIBOSYLFORMYLGLYCINAMIDINE SYNTHASE SUBUNIT PURL"/>
    <property type="match status" value="1"/>
</dbReference>
<dbReference type="PANTHER" id="PTHR43555:SF1">
    <property type="entry name" value="PHOSPHORIBOSYLFORMYLGLYCINAMIDINE SYNTHASE SUBUNIT PURL"/>
    <property type="match status" value="1"/>
</dbReference>
<dbReference type="Pfam" id="PF00586">
    <property type="entry name" value="AIRS"/>
    <property type="match status" value="2"/>
</dbReference>
<dbReference type="Pfam" id="PF02769">
    <property type="entry name" value="AIRS_C"/>
    <property type="match status" value="2"/>
</dbReference>
<dbReference type="Pfam" id="PF18072">
    <property type="entry name" value="FGAR-AT_linker"/>
    <property type="match status" value="1"/>
</dbReference>
<dbReference type="PIRSF" id="PIRSF001587">
    <property type="entry name" value="FGAM_synthase_II"/>
    <property type="match status" value="1"/>
</dbReference>
<dbReference type="SUPFAM" id="SSF56042">
    <property type="entry name" value="PurM C-terminal domain-like"/>
    <property type="match status" value="2"/>
</dbReference>
<dbReference type="SUPFAM" id="SSF55326">
    <property type="entry name" value="PurM N-terminal domain-like"/>
    <property type="match status" value="2"/>
</dbReference>
<sequence length="720" mass="75553">MTEPEITPELIAAHGLKPDEYQRILEIIGRAPTFTELGIFSAMWNEHCSYKSSKKWLRTLPTTGPQVICGPGENAGVVDIGDGQAVIFKMESHNHPSYIEPYQGAATGVGGILRDVFTMGARPIAAMNALSFGEPSHPKTAHIVKGVVEGIGGYGNAFGVPTVGGEVRFHRAYNGNCLVNAFAAGLADADRIFYSAASGVGMPVVYLGAKTGRDGVGGATMASAEFDDTIEEKRPTVQVGDPFTEKRLLEACLELMASDSVISIQDMGAAGLTCSAVEMGDKGDLGIRLQLDAVPQREANMTAYEMMLSESQERMLMVLKPEKEAVARAIFEKWDLDFAIVGETIPEDRFLILHGNEVKADLPLKALSGTAPEYDRPWIETPAAAPLGAVPEVDPIEGLKALIGSPSYAHKAWVWEQYDSQVMADTVRAPGLGAGVVRVHGTPKALAFTSDVTPRYVKANPFEGGKQAVAEAYRNLTAVGARPLATTDNMNFGNPEKPEIMGQFVGAIEGIGAAVAALDMPIVSGNVSLYNETDGVGILPTPTIGAVGLLTSLDELIAGEPQAGDLALVIGTTAGHLGQSALLAEMFGREEGDAPPVDLEAEKRHGEFLRANRKLVRAAADLSDGGLALAAFEMAEAAGLGLTLTPSGTAALFGEDQARYLVACAPDRAEALQAAAEAAGVPLQEVGRFGGAAVTLAGASAPLADLSRLYRRAFAEAIGG</sequence>
<comment type="function">
    <text evidence="1">Part of the phosphoribosylformylglycinamidine synthase complex involved in the purines biosynthetic pathway. Catalyzes the ATP-dependent conversion of formylglycinamide ribonucleotide (FGAR) and glutamine to yield formylglycinamidine ribonucleotide (FGAM) and glutamate. The FGAM synthase complex is composed of three subunits. PurQ produces an ammonia molecule by converting glutamine to glutamate. PurL transfers the ammonia molecule to FGAR to form FGAM in an ATP-dependent manner. PurS interacts with PurQ and PurL and is thought to assist in the transfer of the ammonia molecule from PurQ to PurL.</text>
</comment>
<comment type="catalytic activity">
    <reaction evidence="1">
        <text>N(2)-formyl-N(1)-(5-phospho-beta-D-ribosyl)glycinamide + L-glutamine + ATP + H2O = 2-formamido-N(1)-(5-O-phospho-beta-D-ribosyl)acetamidine + L-glutamate + ADP + phosphate + H(+)</text>
        <dbReference type="Rhea" id="RHEA:17129"/>
        <dbReference type="ChEBI" id="CHEBI:15377"/>
        <dbReference type="ChEBI" id="CHEBI:15378"/>
        <dbReference type="ChEBI" id="CHEBI:29985"/>
        <dbReference type="ChEBI" id="CHEBI:30616"/>
        <dbReference type="ChEBI" id="CHEBI:43474"/>
        <dbReference type="ChEBI" id="CHEBI:58359"/>
        <dbReference type="ChEBI" id="CHEBI:147286"/>
        <dbReference type="ChEBI" id="CHEBI:147287"/>
        <dbReference type="ChEBI" id="CHEBI:456216"/>
        <dbReference type="EC" id="6.3.5.3"/>
    </reaction>
</comment>
<comment type="pathway">
    <text evidence="1">Purine metabolism; IMP biosynthesis via de novo pathway; 5-amino-1-(5-phospho-D-ribosyl)imidazole from N(2)-formyl-N(1)-(5-phospho-D-ribosyl)glycinamide: step 1/2.</text>
</comment>
<comment type="subunit">
    <text evidence="1">Monomer. Part of the FGAM synthase complex composed of 1 PurL, 1 PurQ and 2 PurS subunits.</text>
</comment>
<comment type="subcellular location">
    <subcellularLocation>
        <location evidence="1">Cytoplasm</location>
    </subcellularLocation>
</comment>
<comment type="similarity">
    <text evidence="1">Belongs to the FGAMS family.</text>
</comment>
<protein>
    <recommendedName>
        <fullName evidence="1">Phosphoribosylformylglycinamidine synthase subunit PurL</fullName>
        <shortName evidence="1">FGAM synthase</shortName>
        <ecNumber evidence="1">6.3.5.3</ecNumber>
    </recommendedName>
    <alternativeName>
        <fullName evidence="1">Formylglycinamide ribonucleotide amidotransferase subunit II</fullName>
        <shortName evidence="1">FGAR amidotransferase II</shortName>
        <shortName evidence="1">FGAR-AT II</shortName>
    </alternativeName>
    <alternativeName>
        <fullName evidence="1">Glutamine amidotransferase PurL</fullName>
    </alternativeName>
    <alternativeName>
        <fullName evidence="1">Phosphoribosylformylglycinamidine synthase subunit II</fullName>
    </alternativeName>
</protein>
<name>PURL_CERSK</name>
<gene>
    <name evidence="1" type="primary">purL</name>
    <name type="ordered locus">RSKD131_1271</name>
</gene>
<feature type="chain" id="PRO_1000134907" description="Phosphoribosylformylglycinamidine synthase subunit PurL">
    <location>
        <begin position="1"/>
        <end position="720"/>
    </location>
</feature>
<feature type="active site" evidence="1">
    <location>
        <position position="47"/>
    </location>
</feature>
<feature type="active site" description="Proton acceptor" evidence="1">
    <location>
        <position position="93"/>
    </location>
</feature>
<feature type="binding site" evidence="1">
    <location>
        <position position="50"/>
    </location>
    <ligand>
        <name>ATP</name>
        <dbReference type="ChEBI" id="CHEBI:30616"/>
    </ligand>
</feature>
<feature type="binding site" evidence="1">
    <location>
        <position position="89"/>
    </location>
    <ligand>
        <name>ATP</name>
        <dbReference type="ChEBI" id="CHEBI:30616"/>
    </ligand>
</feature>
<feature type="binding site" evidence="1">
    <location>
        <position position="91"/>
    </location>
    <ligand>
        <name>Mg(2+)</name>
        <dbReference type="ChEBI" id="CHEBI:18420"/>
        <label>1</label>
    </ligand>
</feature>
<feature type="binding site" evidence="1">
    <location>
        <begin position="92"/>
        <end position="95"/>
    </location>
    <ligand>
        <name>substrate</name>
    </ligand>
</feature>
<feature type="binding site" evidence="1">
    <location>
        <position position="114"/>
    </location>
    <ligand>
        <name>substrate</name>
    </ligand>
</feature>
<feature type="binding site" evidence="1">
    <location>
        <position position="115"/>
    </location>
    <ligand>
        <name>Mg(2+)</name>
        <dbReference type="ChEBI" id="CHEBI:18420"/>
        <label>2</label>
    </ligand>
</feature>
<feature type="binding site" evidence="1">
    <location>
        <position position="238"/>
    </location>
    <ligand>
        <name>substrate</name>
    </ligand>
</feature>
<feature type="binding site" evidence="1">
    <location>
        <position position="266"/>
    </location>
    <ligand>
        <name>Mg(2+)</name>
        <dbReference type="ChEBI" id="CHEBI:18420"/>
        <label>2</label>
    </ligand>
</feature>
<feature type="binding site" evidence="1">
    <location>
        <begin position="310"/>
        <end position="312"/>
    </location>
    <ligand>
        <name>substrate</name>
    </ligand>
</feature>
<feature type="binding site" evidence="1">
    <location>
        <position position="488"/>
    </location>
    <ligand>
        <name>ATP</name>
        <dbReference type="ChEBI" id="CHEBI:30616"/>
    </ligand>
</feature>
<feature type="binding site" evidence="1">
    <location>
        <position position="525"/>
    </location>
    <ligand>
        <name>ATP</name>
        <dbReference type="ChEBI" id="CHEBI:30616"/>
    </ligand>
</feature>
<feature type="binding site" evidence="1">
    <location>
        <position position="526"/>
    </location>
    <ligand>
        <name>Mg(2+)</name>
        <dbReference type="ChEBI" id="CHEBI:18420"/>
        <label>1</label>
    </ligand>
</feature>
<feature type="binding site" evidence="1">
    <location>
        <position position="528"/>
    </location>
    <ligand>
        <name>substrate</name>
    </ligand>
</feature>
<evidence type="ECO:0000255" key="1">
    <source>
        <dbReference type="HAMAP-Rule" id="MF_00420"/>
    </source>
</evidence>
<proteinExistence type="inferred from homology"/>
<accession>B9KSY5</accession>